<proteinExistence type="inferred from homology"/>
<protein>
    <recommendedName>
        <fullName evidence="1">Chaperone protein DnaK</fullName>
    </recommendedName>
    <alternativeName>
        <fullName evidence="1">HSP70</fullName>
    </alternativeName>
    <alternativeName>
        <fullName evidence="1">Heat shock 70 kDa protein</fullName>
    </alternativeName>
    <alternativeName>
        <fullName evidence="1">Heat shock protein 70</fullName>
    </alternativeName>
</protein>
<comment type="function">
    <text evidence="1">Acts as a chaperone.</text>
</comment>
<comment type="induction">
    <text evidence="1">By stress conditions e.g. heat shock.</text>
</comment>
<comment type="similarity">
    <text evidence="1">Belongs to the heat shock protein 70 family.</text>
</comment>
<feature type="chain" id="PRO_1000059666" description="Chaperone protein DnaK">
    <location>
        <begin position="1"/>
        <end position="639"/>
    </location>
</feature>
<feature type="region of interest" description="Disordered" evidence="2">
    <location>
        <begin position="603"/>
        <end position="639"/>
    </location>
</feature>
<feature type="compositionally biased region" description="Low complexity" evidence="2">
    <location>
        <begin position="603"/>
        <end position="618"/>
    </location>
</feature>
<feature type="compositionally biased region" description="Acidic residues" evidence="2">
    <location>
        <begin position="625"/>
        <end position="639"/>
    </location>
</feature>
<feature type="modified residue" description="Phosphothreonine; by autocatalysis" evidence="1">
    <location>
        <position position="198"/>
    </location>
</feature>
<dbReference type="EMBL" id="CP000446">
    <property type="protein sequence ID" value="ABI38037.1"/>
    <property type="molecule type" value="Genomic_DNA"/>
</dbReference>
<dbReference type="RefSeq" id="WP_011621749.1">
    <property type="nucleotide sequence ID" value="NC_008321.1"/>
</dbReference>
<dbReference type="SMR" id="Q0HLN0"/>
<dbReference type="KEGG" id="she:Shewmr4_0957"/>
<dbReference type="HOGENOM" id="CLU_005965_2_1_6"/>
<dbReference type="GO" id="GO:0005524">
    <property type="term" value="F:ATP binding"/>
    <property type="evidence" value="ECO:0007669"/>
    <property type="project" value="UniProtKB-UniRule"/>
</dbReference>
<dbReference type="GO" id="GO:0140662">
    <property type="term" value="F:ATP-dependent protein folding chaperone"/>
    <property type="evidence" value="ECO:0007669"/>
    <property type="project" value="InterPro"/>
</dbReference>
<dbReference type="GO" id="GO:0051082">
    <property type="term" value="F:unfolded protein binding"/>
    <property type="evidence" value="ECO:0007669"/>
    <property type="project" value="InterPro"/>
</dbReference>
<dbReference type="CDD" id="cd10234">
    <property type="entry name" value="ASKHA_NBD_HSP70_DnaK-like"/>
    <property type="match status" value="1"/>
</dbReference>
<dbReference type="FunFam" id="2.60.34.10:FF:000014">
    <property type="entry name" value="Chaperone protein DnaK HSP70"/>
    <property type="match status" value="1"/>
</dbReference>
<dbReference type="FunFam" id="1.20.1270.10:FF:000001">
    <property type="entry name" value="Molecular chaperone DnaK"/>
    <property type="match status" value="1"/>
</dbReference>
<dbReference type="FunFam" id="3.30.420.40:FF:000004">
    <property type="entry name" value="Molecular chaperone DnaK"/>
    <property type="match status" value="1"/>
</dbReference>
<dbReference type="FunFam" id="3.90.640.10:FF:000003">
    <property type="entry name" value="Molecular chaperone DnaK"/>
    <property type="match status" value="1"/>
</dbReference>
<dbReference type="Gene3D" id="1.20.1270.10">
    <property type="match status" value="1"/>
</dbReference>
<dbReference type="Gene3D" id="3.30.420.40">
    <property type="match status" value="2"/>
</dbReference>
<dbReference type="Gene3D" id="3.90.640.10">
    <property type="entry name" value="Actin, Chain A, domain 4"/>
    <property type="match status" value="1"/>
</dbReference>
<dbReference type="Gene3D" id="2.60.34.10">
    <property type="entry name" value="Substrate Binding Domain Of DNAk, Chain A, domain 1"/>
    <property type="match status" value="1"/>
</dbReference>
<dbReference type="HAMAP" id="MF_00332">
    <property type="entry name" value="DnaK"/>
    <property type="match status" value="1"/>
</dbReference>
<dbReference type="InterPro" id="IPR043129">
    <property type="entry name" value="ATPase_NBD"/>
</dbReference>
<dbReference type="InterPro" id="IPR012725">
    <property type="entry name" value="Chaperone_DnaK"/>
</dbReference>
<dbReference type="InterPro" id="IPR018181">
    <property type="entry name" value="Heat_shock_70_CS"/>
</dbReference>
<dbReference type="InterPro" id="IPR029048">
    <property type="entry name" value="HSP70_C_sf"/>
</dbReference>
<dbReference type="InterPro" id="IPR029047">
    <property type="entry name" value="HSP70_peptide-bd_sf"/>
</dbReference>
<dbReference type="InterPro" id="IPR013126">
    <property type="entry name" value="Hsp_70_fam"/>
</dbReference>
<dbReference type="NCBIfam" id="NF001413">
    <property type="entry name" value="PRK00290.1"/>
    <property type="match status" value="1"/>
</dbReference>
<dbReference type="NCBIfam" id="NF003520">
    <property type="entry name" value="PRK05183.1"/>
    <property type="match status" value="1"/>
</dbReference>
<dbReference type="NCBIfam" id="TIGR02350">
    <property type="entry name" value="prok_dnaK"/>
    <property type="match status" value="1"/>
</dbReference>
<dbReference type="PANTHER" id="PTHR19375">
    <property type="entry name" value="HEAT SHOCK PROTEIN 70KDA"/>
    <property type="match status" value="1"/>
</dbReference>
<dbReference type="Pfam" id="PF00012">
    <property type="entry name" value="HSP70"/>
    <property type="match status" value="1"/>
</dbReference>
<dbReference type="PRINTS" id="PR00301">
    <property type="entry name" value="HEATSHOCK70"/>
</dbReference>
<dbReference type="SUPFAM" id="SSF53067">
    <property type="entry name" value="Actin-like ATPase domain"/>
    <property type="match status" value="2"/>
</dbReference>
<dbReference type="SUPFAM" id="SSF100920">
    <property type="entry name" value="Heat shock protein 70kD (HSP70), peptide-binding domain"/>
    <property type="match status" value="1"/>
</dbReference>
<dbReference type="PROSITE" id="PS00297">
    <property type="entry name" value="HSP70_1"/>
    <property type="match status" value="1"/>
</dbReference>
<dbReference type="PROSITE" id="PS00329">
    <property type="entry name" value="HSP70_2"/>
    <property type="match status" value="1"/>
</dbReference>
<dbReference type="PROSITE" id="PS01036">
    <property type="entry name" value="HSP70_3"/>
    <property type="match status" value="1"/>
</dbReference>
<organism>
    <name type="scientific">Shewanella sp. (strain MR-4)</name>
    <dbReference type="NCBI Taxonomy" id="60480"/>
    <lineage>
        <taxon>Bacteria</taxon>
        <taxon>Pseudomonadati</taxon>
        <taxon>Pseudomonadota</taxon>
        <taxon>Gammaproteobacteria</taxon>
        <taxon>Alteromonadales</taxon>
        <taxon>Shewanellaceae</taxon>
        <taxon>Shewanella</taxon>
    </lineage>
</organism>
<evidence type="ECO:0000255" key="1">
    <source>
        <dbReference type="HAMAP-Rule" id="MF_00332"/>
    </source>
</evidence>
<evidence type="ECO:0000256" key="2">
    <source>
        <dbReference type="SAM" id="MobiDB-lite"/>
    </source>
</evidence>
<reference key="1">
    <citation type="submission" date="2006-08" db="EMBL/GenBank/DDBJ databases">
        <title>Complete sequence of Shewanella sp. MR-4.</title>
        <authorList>
            <consortium name="US DOE Joint Genome Institute"/>
            <person name="Copeland A."/>
            <person name="Lucas S."/>
            <person name="Lapidus A."/>
            <person name="Barry K."/>
            <person name="Detter J.C."/>
            <person name="Glavina del Rio T."/>
            <person name="Hammon N."/>
            <person name="Israni S."/>
            <person name="Dalin E."/>
            <person name="Tice H."/>
            <person name="Pitluck S."/>
            <person name="Kiss H."/>
            <person name="Brettin T."/>
            <person name="Bruce D."/>
            <person name="Han C."/>
            <person name="Tapia R."/>
            <person name="Gilna P."/>
            <person name="Schmutz J."/>
            <person name="Larimer F."/>
            <person name="Land M."/>
            <person name="Hauser L."/>
            <person name="Kyrpides N."/>
            <person name="Mikhailova N."/>
            <person name="Nealson K."/>
            <person name="Konstantinidis K."/>
            <person name="Klappenbach J."/>
            <person name="Tiedje J."/>
            <person name="Richardson P."/>
        </authorList>
    </citation>
    <scope>NUCLEOTIDE SEQUENCE [LARGE SCALE GENOMIC DNA]</scope>
    <source>
        <strain>MR-4</strain>
    </source>
</reference>
<gene>
    <name evidence="1" type="primary">dnaK</name>
    <name type="ordered locus">Shewmr4_0957</name>
</gene>
<accession>Q0HLN0</accession>
<keyword id="KW-0067">ATP-binding</keyword>
<keyword id="KW-0143">Chaperone</keyword>
<keyword id="KW-0547">Nucleotide-binding</keyword>
<keyword id="KW-0597">Phosphoprotein</keyword>
<keyword id="KW-0346">Stress response</keyword>
<name>DNAK_SHESM</name>
<sequence>MGKIIGIDLGTTNSCVAVLDGGKARVLENAEGDRTTPSIIAYTDDETIVGQPAKRQAVTNPNNTFFAIKRLIGRRFKDDEVQRDVNIMPFKIIQADNGDAWVESRGNKMAPPQVSAEILKKMKKTAEDFLGEEVTEAVITVPAYFNDSQRQATKDAGRIAGLEVKRIINEPTAAALAYGIDKKQGDNIVAVYDLGGGTFDISIIEIDSNDGDQTFEVLATNGDTHLGGEDFDNRLINYLADEFKKEQGLDLRKDPLAMQRLKEAAEKAKIELSSTNQTEVNLPYITADATGPKHLVVKITRAKLESLVEDLIIRTLEPLKVALADADLSVSDINEVILVGGQTRMPKVQEAVTNFFGKEPRKDVNPDEAVAVGAAIQAGVLSGDVKDVLLLDVTPLSLGIETMGSVMTKLIEKNTTIPTKAQQVFSTADDNQSAVTIHVLQGERKQASANKSLGQFNLDGIEPAPRGMPQIEVMFDIDADGILHVSATDKKTGKKQNITIKASSGLSEEEVAQMVRDAEAHAEEDKKFEELVQSRNQADGLVHATKKQVEEAGDALPADDKAKIEAAMSAVEVATKGNDKEAIEKATQELIEASAKLMEIAQAKAQTQGGAQEGAAKQSNATADDVVDAEFEEVKDDKK</sequence>